<dbReference type="EMBL" id="AF454761">
    <property type="protein sequence ID" value="AAQ04697.1"/>
    <property type="molecule type" value="mRNA"/>
</dbReference>
<dbReference type="RefSeq" id="NP_001002024.1">
    <property type="nucleotide sequence ID" value="NM_001002024.1"/>
</dbReference>
<dbReference type="FunCoup" id="Q71MB6">
    <property type="interactions" value="29"/>
</dbReference>
<dbReference type="STRING" id="10116.ENSRNOP00000037089"/>
<dbReference type="ChEMBL" id="CHEMBL2073710"/>
<dbReference type="iPTMnet" id="Q71MB6"/>
<dbReference type="PhosphoSitePlus" id="Q71MB6"/>
<dbReference type="PaxDb" id="10116-ENSRNOP00000037089"/>
<dbReference type="GeneID" id="432363"/>
<dbReference type="KEGG" id="rno:432363"/>
<dbReference type="UCSC" id="RGD:1303048">
    <property type="organism name" value="rat"/>
</dbReference>
<dbReference type="AGR" id="RGD:1303048"/>
<dbReference type="CTD" id="353189"/>
<dbReference type="RGD" id="1303048">
    <property type="gene designation" value="Slco4c1"/>
</dbReference>
<dbReference type="eggNOG" id="KOG3626">
    <property type="taxonomic scope" value="Eukaryota"/>
</dbReference>
<dbReference type="InParanoid" id="Q71MB6"/>
<dbReference type="PhylomeDB" id="Q71MB6"/>
<dbReference type="Reactome" id="R-RNO-6798695">
    <property type="pathway name" value="Neutrophil degranulation"/>
</dbReference>
<dbReference type="Reactome" id="R-RNO-879518">
    <property type="pathway name" value="Transport of organic anions"/>
</dbReference>
<dbReference type="SABIO-RK" id="Q71MB6"/>
<dbReference type="PRO" id="PR:Q71MB6"/>
<dbReference type="Proteomes" id="UP000002494">
    <property type="component" value="Unplaced"/>
</dbReference>
<dbReference type="GO" id="GO:0016324">
    <property type="term" value="C:apical plasma membrane"/>
    <property type="evidence" value="ECO:0007669"/>
    <property type="project" value="UniProtKB-SubCell"/>
</dbReference>
<dbReference type="GO" id="GO:0016323">
    <property type="term" value="C:basolateral plasma membrane"/>
    <property type="evidence" value="ECO:0000314"/>
    <property type="project" value="RGD"/>
</dbReference>
<dbReference type="GO" id="GO:0008514">
    <property type="term" value="F:organic anion transmembrane transporter activity"/>
    <property type="evidence" value="ECO:0000250"/>
    <property type="project" value="UniProtKB"/>
</dbReference>
<dbReference type="GO" id="GO:0015347">
    <property type="term" value="F:sodium-independent organic anion transmembrane transporter activity"/>
    <property type="evidence" value="ECO:0000318"/>
    <property type="project" value="GO_Central"/>
</dbReference>
<dbReference type="GO" id="GO:0030154">
    <property type="term" value="P:cell differentiation"/>
    <property type="evidence" value="ECO:0007669"/>
    <property type="project" value="UniProtKB-KW"/>
</dbReference>
<dbReference type="GO" id="GO:0006811">
    <property type="term" value="P:monoatomic ion transport"/>
    <property type="evidence" value="ECO:0007669"/>
    <property type="project" value="UniProtKB-KW"/>
</dbReference>
<dbReference type="GO" id="GO:0015711">
    <property type="term" value="P:organic anion transport"/>
    <property type="evidence" value="ECO:0000314"/>
    <property type="project" value="RGD"/>
</dbReference>
<dbReference type="GO" id="GO:0043252">
    <property type="term" value="P:sodium-independent organic anion transport"/>
    <property type="evidence" value="ECO:0000318"/>
    <property type="project" value="GO_Central"/>
</dbReference>
<dbReference type="GO" id="GO:0007283">
    <property type="term" value="P:spermatogenesis"/>
    <property type="evidence" value="ECO:0007669"/>
    <property type="project" value="UniProtKB-KW"/>
</dbReference>
<dbReference type="CDD" id="cd17463">
    <property type="entry name" value="MFS_SLCO4C_OATP4C"/>
    <property type="match status" value="1"/>
</dbReference>
<dbReference type="Gene3D" id="1.20.1250.20">
    <property type="entry name" value="MFS general substrate transporter like domains"/>
    <property type="match status" value="1"/>
</dbReference>
<dbReference type="InterPro" id="IPR002350">
    <property type="entry name" value="Kazal_dom"/>
</dbReference>
<dbReference type="InterPro" id="IPR036058">
    <property type="entry name" value="Kazal_dom_sf"/>
</dbReference>
<dbReference type="InterPro" id="IPR020846">
    <property type="entry name" value="MFS_dom"/>
</dbReference>
<dbReference type="InterPro" id="IPR036259">
    <property type="entry name" value="MFS_trans_sf"/>
</dbReference>
<dbReference type="InterPro" id="IPR004156">
    <property type="entry name" value="OATP"/>
</dbReference>
<dbReference type="NCBIfam" id="TIGR00805">
    <property type="entry name" value="oat"/>
    <property type="match status" value="1"/>
</dbReference>
<dbReference type="PANTHER" id="PTHR11388">
    <property type="entry name" value="ORGANIC ANION TRANSPORTER"/>
    <property type="match status" value="1"/>
</dbReference>
<dbReference type="PANTHER" id="PTHR11388:SF103">
    <property type="entry name" value="SOLUTE CARRIER ORGANIC ANION TRANSPORTER FAMILY MEMBER 4C1"/>
    <property type="match status" value="1"/>
</dbReference>
<dbReference type="Pfam" id="PF07648">
    <property type="entry name" value="Kazal_2"/>
    <property type="match status" value="1"/>
</dbReference>
<dbReference type="Pfam" id="PF03137">
    <property type="entry name" value="OATP"/>
    <property type="match status" value="1"/>
</dbReference>
<dbReference type="SUPFAM" id="SSF100895">
    <property type="entry name" value="Kazal-type serine protease inhibitors"/>
    <property type="match status" value="1"/>
</dbReference>
<dbReference type="SUPFAM" id="SSF103473">
    <property type="entry name" value="MFS general substrate transporter"/>
    <property type="match status" value="1"/>
</dbReference>
<dbReference type="PROSITE" id="PS51465">
    <property type="entry name" value="KAZAL_2"/>
    <property type="match status" value="1"/>
</dbReference>
<dbReference type="PROSITE" id="PS50850">
    <property type="entry name" value="MFS"/>
    <property type="match status" value="1"/>
</dbReference>
<proteinExistence type="evidence at protein level"/>
<name>SO4C1_RAT</name>
<sequence>MQGSKGVENPAFVPSSPDTPRRASASPSQVEVSAVASRNQNGGSQPRESEDPQKSTEPSPPSSTLPASDEPPGSQLSELEEGPCGWRNFHPQCLQRCNNPKGFLLHYCLLALTQGIVVNGLVNISISTIEKRYEMKSSLTGLISSSYDISFCVLSLFVSFFGERGHKPRWLAFASFMIGLGALVFSLPHFFSGRYELGTIFEDTCLTRNSTRCASSTSLLSNYFYVFVLGQLLLGTGGTPLYTLGTAFIDDSVPTHKSSLYIGIGYSMSILGPAIGYVLGGQLLTMYIDVAMGQSSDLTEDDPRWLGAWWIGFLLAWLFAWSLIMPFSCFPKHLPGTAKIQAGKTSQTHQNNSTSFQHMDENFGKSIKDFPTAVKNLMRNTVFICLVLSTTSEALVTTGFATFLPKFIENQFGLTSSFAATLGGAVLIPGAALGQILGGVLVSKFKMKCKNTMKFALCTSGVALMLSFVFIYAKCENGPFAGVSESYNGTGEMGNLTAPCNANCNCLRSYYYPLCGSDGVQYFSPCFAGCLNSVSNRKPKAYYNCSCIERKVDITSTAXSPDFEARAGKCKTQCSNLPIFLGIFFITVIFTFMAGTPITVSILRCVNHRQRSLALGVQFMLLRLLGTIPGPIIFGVTIDSTCVLWDINECGTKGACWIYDNIRMAHMLVAISVTCKVITIFFNGLAIVLYKPPPPGTEVSFQSQNVVVSTITVEEDLNKIENEG</sequence>
<accession>Q71MB6</accession>
<organism>
    <name type="scientific">Rattus norvegicus</name>
    <name type="common">Rat</name>
    <dbReference type="NCBI Taxonomy" id="10116"/>
    <lineage>
        <taxon>Eukaryota</taxon>
        <taxon>Metazoa</taxon>
        <taxon>Chordata</taxon>
        <taxon>Craniata</taxon>
        <taxon>Vertebrata</taxon>
        <taxon>Euteleostomi</taxon>
        <taxon>Mammalia</taxon>
        <taxon>Eutheria</taxon>
        <taxon>Euarchontoglires</taxon>
        <taxon>Glires</taxon>
        <taxon>Rodentia</taxon>
        <taxon>Myomorpha</taxon>
        <taxon>Muroidea</taxon>
        <taxon>Muridae</taxon>
        <taxon>Murinae</taxon>
        <taxon>Rattus</taxon>
    </lineage>
</organism>
<feature type="chain" id="PRO_0000337154" description="Solute carrier organic anion transporter family member 4C1">
    <location>
        <begin position="1"/>
        <end position="724"/>
    </location>
</feature>
<feature type="topological domain" description="Cytoplasmic" evidence="3">
    <location>
        <begin position="1"/>
        <end position="101"/>
    </location>
</feature>
<feature type="transmembrane region" description="Helical; Name=1" evidence="3">
    <location>
        <begin position="102"/>
        <end position="122"/>
    </location>
</feature>
<feature type="topological domain" description="Extracellular" evidence="3">
    <location>
        <begin position="123"/>
        <end position="141"/>
    </location>
</feature>
<feature type="transmembrane region" description="Helical; Name=2" evidence="3">
    <location>
        <begin position="142"/>
        <end position="162"/>
    </location>
</feature>
<feature type="topological domain" description="Cytoplasmic" evidence="3">
    <location>
        <begin position="163"/>
        <end position="168"/>
    </location>
</feature>
<feature type="transmembrane region" description="Helical; Name=3" evidence="3">
    <location>
        <begin position="169"/>
        <end position="193"/>
    </location>
</feature>
<feature type="topological domain" description="Extracellular" evidence="3">
    <location>
        <begin position="194"/>
        <end position="218"/>
    </location>
</feature>
<feature type="transmembrane region" description="Helical; Name=4" evidence="3">
    <location>
        <begin position="219"/>
        <end position="249"/>
    </location>
</feature>
<feature type="topological domain" description="Cytoplasmic" evidence="3">
    <location>
        <begin position="250"/>
        <end position="269"/>
    </location>
</feature>
<feature type="transmembrane region" description="Helical; Name=5" evidence="3">
    <location>
        <begin position="270"/>
        <end position="290"/>
    </location>
</feature>
<feature type="topological domain" description="Extracellular" evidence="3">
    <location>
        <begin position="291"/>
        <end position="306"/>
    </location>
</feature>
<feature type="transmembrane region" description="Helical; Name=6" evidence="3">
    <location>
        <begin position="307"/>
        <end position="331"/>
    </location>
</feature>
<feature type="topological domain" description="Cytoplasmic" evidence="3">
    <location>
        <begin position="332"/>
        <end position="376"/>
    </location>
</feature>
<feature type="transmembrane region" description="Helical; Name=7" evidence="3">
    <location>
        <begin position="377"/>
        <end position="398"/>
    </location>
</feature>
<feature type="topological domain" description="Extracellular" evidence="3">
    <location>
        <begin position="399"/>
        <end position="418"/>
    </location>
</feature>
<feature type="transmembrane region" description="Helical; Name=8" evidence="3">
    <location>
        <begin position="419"/>
        <end position="442"/>
    </location>
</feature>
<feature type="topological domain" description="Cytoplasmic" evidence="3">
    <location>
        <begin position="443"/>
        <end position="446"/>
    </location>
</feature>
<feature type="transmembrane region" description="Helical; Name=9" evidence="3">
    <location>
        <begin position="447"/>
        <end position="470"/>
    </location>
</feature>
<feature type="topological domain" description="Extracellular" evidence="3">
    <location>
        <begin position="471"/>
        <end position="580"/>
    </location>
</feature>
<feature type="transmembrane region" description="Helical; Name=10" evidence="3">
    <location>
        <begin position="581"/>
        <end position="603"/>
    </location>
</feature>
<feature type="topological domain" description="Cytoplasmic" evidence="3">
    <location>
        <begin position="604"/>
        <end position="612"/>
    </location>
</feature>
<feature type="transmembrane region" description="Helical; Name=11" evidence="3">
    <location>
        <begin position="613"/>
        <end position="638"/>
    </location>
</feature>
<feature type="topological domain" description="Extracellular" evidence="3">
    <location>
        <begin position="639"/>
        <end position="672"/>
    </location>
</feature>
<feature type="transmembrane region" description="Helical; Name=12" evidence="3">
    <location>
        <begin position="673"/>
        <end position="690"/>
    </location>
</feature>
<feature type="topological domain" description="Cytoplasmic" evidence="3">
    <location>
        <begin position="691"/>
        <end position="724"/>
    </location>
</feature>
<feature type="domain" description="Kazal-like" evidence="4">
    <location>
        <begin position="494"/>
        <end position="549"/>
    </location>
</feature>
<feature type="region of interest" description="Disordered" evidence="5">
    <location>
        <begin position="1"/>
        <end position="80"/>
    </location>
</feature>
<feature type="compositionally biased region" description="Polar residues" evidence="5">
    <location>
        <begin position="25"/>
        <end position="46"/>
    </location>
</feature>
<feature type="modified residue" description="Phosphoserine" evidence="13">
    <location>
        <position position="15"/>
    </location>
</feature>
<feature type="modified residue" description="Phosphoserine" evidence="13">
    <location>
        <position position="16"/>
    </location>
</feature>
<feature type="modified residue" description="Phosphothreonine" evidence="2">
    <location>
        <position position="19"/>
    </location>
</feature>
<feature type="modified residue" description="Phosphoserine" evidence="2">
    <location>
        <position position="24"/>
    </location>
</feature>
<feature type="modified residue" description="Phosphoserine" evidence="2">
    <location>
        <position position="26"/>
    </location>
</feature>
<feature type="modified residue" description="Phosphoserine" evidence="2">
    <location>
        <position position="28"/>
    </location>
</feature>
<feature type="disulfide bond" evidence="4">
    <location>
        <begin position="500"/>
        <end position="530"/>
    </location>
</feature>
<feature type="disulfide bond" evidence="4">
    <location>
        <begin position="506"/>
        <end position="526"/>
    </location>
</feature>
<feature type="disulfide bond" evidence="4">
    <location>
        <begin position="515"/>
        <end position="547"/>
    </location>
</feature>
<gene>
    <name evidence="12" type="primary">Slco4c1</name>
    <name evidence="8" type="synonym">Oatp4c1</name>
    <name evidence="1" type="synonym">Slc21a20</name>
</gene>
<comment type="function">
    <text evidence="1 2 6 7 8 9">Mediates the transport of organic anions such as steroids (estrone 3-sulfate, chenodeoxycholate, glycocholate) and thyroid hormones (3,3',5-triiodo-L-thyronine (T3), L-thyroxine (T4)), in the kidney. Capable of transporting cAMP and pharmacological substances such as digoxin, ouabain and methotrexate (PubMed:14993604). Transport is independent of sodium, chloride ion, and ATP (PubMed:14993604, PubMed:22768102). Transport activity is stimulated by an acidic extracellular environment due to increased substrate affinity to the transporter (PubMed:14993604, PubMed:22768102). The driving force for this transport activity is currently not known (PubMed:22768102). The role of hydrogencarbonate (HCO3(-), bicarbonate) as the probable counteranion that exchanges for organic anions is still not well defined (PubMed:14993604, PubMed:22768102). Functions as an uptake transporter at the apical membrane, suggesting a role in renal reabsorption (PubMed:22768102). Involved in the renal secretion of the uremic toxin ADMA (N(omega),N(omega)-dimethyl-L-arginine or asymmetrical dimethylarginine), which is associated to cardiovascular events and mortality, and the structurally related amino acids L-arginine and L-homoarginine (a cardioprotective biomarker). Can act bidirectionally, suggesting a dual protective role of this transport protein; exporting L-homoarginine after being synthesized in proximal tubule cells, and mediating uptake of ADMA from the blood into proximal tubule cells where it is degraded by the enzyme dimethylarginine dimethylaminohydrolase 1 (DDAH1) (By similarity). May be involved in sperm maturation by enabling directed movement of organic anions and compounds within or between cells. This ion-transporting process is important to maintain the strict epididymal homeostasis necessary for sperm maturation. May have a role in secretory functions since seminal vesicle epithelial cells are assumed to secrete proteins involved in decapacitation by modifying surface proteins to facilitate the acquisition of the ability to fertilize the egg (By similarity).</text>
</comment>
<comment type="catalytic activity">
    <reaction evidence="7">
        <text>estrone 3-sulfate(out) = estrone 3-sulfate(in)</text>
        <dbReference type="Rhea" id="RHEA:71835"/>
        <dbReference type="ChEBI" id="CHEBI:60050"/>
    </reaction>
</comment>
<comment type="catalytic activity">
    <reaction evidence="1">
        <text>L-thyroxine(out) = L-thyroxine(in)</text>
        <dbReference type="Rhea" id="RHEA:71819"/>
        <dbReference type="ChEBI" id="CHEBI:58448"/>
    </reaction>
</comment>
<comment type="catalytic activity">
    <reaction evidence="6">
        <text>3,3',5-triiodo-L-thyronine(out) = 3,3',5-triiodo-L-thyronine(in)</text>
        <dbReference type="Rhea" id="RHEA:71811"/>
        <dbReference type="ChEBI" id="CHEBI:533015"/>
    </reaction>
</comment>
<comment type="catalytic activity">
    <reaction evidence="1">
        <text>chenodeoxycholate(out) = chenodeoxycholate(in)</text>
        <dbReference type="Rhea" id="RHEA:75051"/>
        <dbReference type="ChEBI" id="CHEBI:36234"/>
    </reaction>
</comment>
<comment type="catalytic activity">
    <reaction evidence="1">
        <text>glycocholate(out) = glycocholate(in)</text>
        <dbReference type="Rhea" id="RHEA:71851"/>
        <dbReference type="ChEBI" id="CHEBI:29746"/>
    </reaction>
</comment>
<comment type="catalytic activity">
    <reaction evidence="1">
        <text>L-homoarginine(in) = L-homoarginine(out)</text>
        <dbReference type="Rhea" id="RHEA:71203"/>
        <dbReference type="ChEBI" id="CHEBI:143006"/>
    </reaction>
</comment>
<comment type="catalytic activity">
    <reaction evidence="1">
        <text>L-arginine(in) = L-arginine(out)</text>
        <dbReference type="Rhea" id="RHEA:32143"/>
        <dbReference type="ChEBI" id="CHEBI:32682"/>
    </reaction>
</comment>
<comment type="catalytic activity">
    <reaction evidence="1">
        <text>N(omega),N(omega)-dimethyl-L-arginine(out) = N(omega),N(omega)-dimethyl-L-arginine(in)</text>
        <dbReference type="Rhea" id="RHEA:75047"/>
        <dbReference type="ChEBI" id="CHEBI:58326"/>
    </reaction>
</comment>
<comment type="biophysicochemical properties">
    <kinetics>
        <KM evidence="6">8 uM for digoxin</KM>
        <KM evidence="6">1.9 uM for 3,3',5-triiodo-L-thyronine</KM>
    </kinetics>
</comment>
<comment type="subcellular location">
    <subcellularLocation>
        <location evidence="6">Basolateral cell membrane</location>
        <topology evidence="6">Multi-pass membrane protein</topology>
    </subcellularLocation>
    <subcellularLocation>
        <location evidence="7">Apical cell membrane</location>
    </subcellularLocation>
    <text evidence="6">Detected at the basolateral membrane of the proximal tubule cell in the kidney.</text>
</comment>
<comment type="tissue specificity">
    <text evidence="6 7">Predominantly expressed in kidney and lung but also weakly expressed in brain (PubMed:14993604). Localizes primarily in the proximal straight tubules, the S3 fraction of the nephron (PubMed:22768102).</text>
</comment>
<comment type="induction">
    <text evidence="6">Expression is significantly decreased in renal failure.</text>
</comment>
<comment type="similarity">
    <text evidence="3">Belongs to the organo anion transporter (TC 2.A.60) family.</text>
</comment>
<protein>
    <recommendedName>
        <fullName>Solute carrier organic anion transporter family member 4C1</fullName>
        <shortName evidence="9">SLCO4C1</shortName>
    </recommendedName>
    <alternativeName>
        <fullName evidence="8 9">Organic anion transporting polypeptide 4C1</fullName>
        <shortName evidence="8 9">OATP4C1</shortName>
    </alternativeName>
    <alternativeName>
        <fullName>Solute carrier family 21 member 20</fullName>
    </alternativeName>
</protein>
<evidence type="ECO:0000250" key="1">
    <source>
        <dbReference type="UniProtKB" id="Q6ZQN7"/>
    </source>
</evidence>
<evidence type="ECO:0000250" key="2">
    <source>
        <dbReference type="UniProtKB" id="Q8BGD4"/>
    </source>
</evidence>
<evidence type="ECO:0000255" key="3"/>
<evidence type="ECO:0000255" key="4">
    <source>
        <dbReference type="PROSITE-ProRule" id="PRU00798"/>
    </source>
</evidence>
<evidence type="ECO:0000256" key="5">
    <source>
        <dbReference type="SAM" id="MobiDB-lite"/>
    </source>
</evidence>
<evidence type="ECO:0000269" key="6">
    <source>
    </source>
</evidence>
<evidence type="ECO:0000269" key="7">
    <source>
    </source>
</evidence>
<evidence type="ECO:0000303" key="8">
    <source>
    </source>
</evidence>
<evidence type="ECO:0000303" key="9">
    <source>
    </source>
</evidence>
<evidence type="ECO:0000305" key="10"/>
<evidence type="ECO:0000312" key="11">
    <source>
        <dbReference type="EMBL" id="AAQ04697.1"/>
    </source>
</evidence>
<evidence type="ECO:0000312" key="12">
    <source>
        <dbReference type="RGD" id="1303048"/>
    </source>
</evidence>
<evidence type="ECO:0007744" key="13">
    <source>
    </source>
</evidence>
<keyword id="KW-1003">Cell membrane</keyword>
<keyword id="KW-0217">Developmental protein</keyword>
<keyword id="KW-0221">Differentiation</keyword>
<keyword id="KW-1015">Disulfide bond</keyword>
<keyword id="KW-0406">Ion transport</keyword>
<keyword id="KW-0472">Membrane</keyword>
<keyword id="KW-0597">Phosphoprotein</keyword>
<keyword id="KW-1185">Reference proteome</keyword>
<keyword id="KW-0744">Spermatogenesis</keyword>
<keyword id="KW-0812">Transmembrane</keyword>
<keyword id="KW-1133">Transmembrane helix</keyword>
<keyword id="KW-0813">Transport</keyword>
<reference evidence="10 11" key="1">
    <citation type="journal article" date="2004" name="Proc. Natl. Acad. Sci. U.S.A.">
        <title>Isolation and characterization of a digoxin transporter and its rat homologue expressed in the kidney.</title>
        <authorList>
            <person name="Mikkaichi T."/>
            <person name="Suzuki T."/>
            <person name="Onogawa T."/>
            <person name="Tanemoto M."/>
            <person name="Mizutamari H."/>
            <person name="Okada M."/>
            <person name="Chaki T."/>
            <person name="Masuda S."/>
            <person name="Tokui T."/>
            <person name="Eto N."/>
            <person name="Abe M."/>
            <person name="Satoh F."/>
            <person name="Unno M."/>
            <person name="Hishinuma T."/>
            <person name="Inui K."/>
            <person name="Ito S."/>
            <person name="Goto J."/>
            <person name="Abe T."/>
        </authorList>
    </citation>
    <scope>NUCLEOTIDE SEQUENCE [MRNA]</scope>
    <scope>FUNCTION</scope>
    <scope>TRANSPORTER ACTIVITY</scope>
    <scope>BIOPHYSICOCHEMICAL PROPERTIES</scope>
    <scope>SUBCELLULAR LOCATION</scope>
    <scope>TISSUE SPECIFICITY</scope>
    <scope>INDUCTION</scope>
    <source>
        <tissue evidence="6">Kidney</tissue>
    </source>
</reference>
<reference key="2">
    <citation type="journal article" date="2012" name="PLoS ONE">
        <title>Localization and functional characterization of the rat Oatp4c1 transporter in an in vitro cell system and rat tissues.</title>
        <authorList>
            <person name="Kuo K.L."/>
            <person name="Zhu H."/>
            <person name="McNamara P.J."/>
            <person name="Leggas M."/>
        </authorList>
    </citation>
    <scope>FUNCTION</scope>
    <scope>TISSUE SPECIFICITY</scope>
    <scope>TRANSPORTER ACTIVITY</scope>
    <scope>SUBCELLULAR LOCATION</scope>
</reference>
<reference key="3">
    <citation type="journal article" date="2012" name="Nat. Commun.">
        <title>Quantitative maps of protein phosphorylation sites across 14 different rat organs and tissues.</title>
        <authorList>
            <person name="Lundby A."/>
            <person name="Secher A."/>
            <person name="Lage K."/>
            <person name="Nordsborg N.B."/>
            <person name="Dmytriyev A."/>
            <person name="Lundby C."/>
            <person name="Olsen J.V."/>
        </authorList>
    </citation>
    <scope>PHOSPHORYLATION [LARGE SCALE ANALYSIS] AT SER-15 AND SER-16</scope>
    <scope>IDENTIFICATION BY MASS SPECTROMETRY [LARGE SCALE ANALYSIS]</scope>
</reference>